<accession>P58178</accession>
<organism>
    <name type="scientific">Saccharolobus solfataricus (strain ATCC 35092 / DSM 1617 / JCM 11322 / P2)</name>
    <name type="common">Sulfolobus solfataricus</name>
    <dbReference type="NCBI Taxonomy" id="273057"/>
    <lineage>
        <taxon>Archaea</taxon>
        <taxon>Thermoproteota</taxon>
        <taxon>Thermoprotei</taxon>
        <taxon>Sulfolobales</taxon>
        <taxon>Sulfolobaceae</taxon>
        <taxon>Saccharolobus</taxon>
    </lineage>
</organism>
<sequence length="198" mass="22309">MSNSAVSYKPIVNIENIVATVTLEQSLDLYAMERSIPNIEYDPDQFPGLIFRLEQPKVTALIFKSGKMVVTGAKSTEELIKAVKRIIKTLKKYGIKIVGKPKIQIQNIVASANLHVNVNLDKAAFLLENNMYEPEQFPGLIFRMDDPRVVLLIFSSGKMVITGAKREDEVSKAVKRIFDKLAELDCVKPIEEEEELEL</sequence>
<reference key="1">
    <citation type="journal article" date="2001" name="Proc. Natl. Acad. Sci. U.S.A.">
        <title>The complete genome of the crenarchaeon Sulfolobus solfataricus P2.</title>
        <authorList>
            <person name="She Q."/>
            <person name="Singh R.K."/>
            <person name="Confalonieri F."/>
            <person name="Zivanovic Y."/>
            <person name="Allard G."/>
            <person name="Awayez M.J."/>
            <person name="Chan-Weiher C.C.-Y."/>
            <person name="Clausen I.G."/>
            <person name="Curtis B.A."/>
            <person name="De Moors A."/>
            <person name="Erauso G."/>
            <person name="Fletcher C."/>
            <person name="Gordon P.M.K."/>
            <person name="Heikamp-de Jong I."/>
            <person name="Jeffries A.C."/>
            <person name="Kozera C.J."/>
            <person name="Medina N."/>
            <person name="Peng X."/>
            <person name="Thi-Ngoc H.P."/>
            <person name="Redder P."/>
            <person name="Schenk M.E."/>
            <person name="Theriault C."/>
            <person name="Tolstrup N."/>
            <person name="Charlebois R.L."/>
            <person name="Doolittle W.F."/>
            <person name="Duguet M."/>
            <person name="Gaasterland T."/>
            <person name="Garrett R.A."/>
            <person name="Ragan M.A."/>
            <person name="Sensen C.W."/>
            <person name="Van der Oost J."/>
        </authorList>
    </citation>
    <scope>NUCLEOTIDE SEQUENCE [LARGE SCALE GENOMIC DNA]</scope>
    <source>
        <strain>ATCC 35092 / DSM 1617 / JCM 11322 / P2</strain>
    </source>
</reference>
<dbReference type="EMBL" id="AE006641">
    <property type="protein sequence ID" value="AAK41225.1"/>
    <property type="status" value="ALT_INIT"/>
    <property type="molecule type" value="Genomic_DNA"/>
</dbReference>
<dbReference type="PIR" id="B90246">
    <property type="entry name" value="B90246"/>
</dbReference>
<dbReference type="SMR" id="P58178"/>
<dbReference type="FunCoup" id="P58178">
    <property type="interactions" value="209"/>
</dbReference>
<dbReference type="STRING" id="273057.SSO0951"/>
<dbReference type="PaxDb" id="273057-SSO0951"/>
<dbReference type="EnsemblBacteria" id="AAK41225">
    <property type="protein sequence ID" value="AAK41225"/>
    <property type="gene ID" value="SSO0951"/>
</dbReference>
<dbReference type="KEGG" id="sso:SSO0951"/>
<dbReference type="PATRIC" id="fig|273057.12.peg.947"/>
<dbReference type="eggNOG" id="arCOG01764">
    <property type="taxonomic scope" value="Archaea"/>
</dbReference>
<dbReference type="HOGENOM" id="CLU_060161_4_3_2"/>
<dbReference type="InParanoid" id="P58178"/>
<dbReference type="PhylomeDB" id="P58178"/>
<dbReference type="Proteomes" id="UP000001974">
    <property type="component" value="Chromosome"/>
</dbReference>
<dbReference type="GO" id="GO:0003677">
    <property type="term" value="F:DNA binding"/>
    <property type="evidence" value="ECO:0007669"/>
    <property type="project" value="UniProtKB-KW"/>
</dbReference>
<dbReference type="GO" id="GO:0003700">
    <property type="term" value="F:DNA-binding transcription factor activity"/>
    <property type="evidence" value="ECO:0007669"/>
    <property type="project" value="UniProtKB-UniRule"/>
</dbReference>
<dbReference type="GO" id="GO:0140223">
    <property type="term" value="F:general transcription initiation factor activity"/>
    <property type="evidence" value="ECO:0000318"/>
    <property type="project" value="GO_Central"/>
</dbReference>
<dbReference type="GO" id="GO:0006352">
    <property type="term" value="P:DNA-templated transcription initiation"/>
    <property type="evidence" value="ECO:0000318"/>
    <property type="project" value="GO_Central"/>
</dbReference>
<dbReference type="CDD" id="cd04518">
    <property type="entry name" value="TBP_archaea"/>
    <property type="match status" value="1"/>
</dbReference>
<dbReference type="FunFam" id="3.30.310.10:FF:000007">
    <property type="entry name" value="TATA-box-binding protein"/>
    <property type="match status" value="1"/>
</dbReference>
<dbReference type="FunFam" id="3.30.310.10:FF:000010">
    <property type="entry name" value="TATA-box-binding protein"/>
    <property type="match status" value="1"/>
</dbReference>
<dbReference type="Gene3D" id="3.30.310.10">
    <property type="entry name" value="TATA-Binding Protein"/>
    <property type="match status" value="2"/>
</dbReference>
<dbReference type="HAMAP" id="MF_00408">
    <property type="entry name" value="TATA_bind_prot_arch"/>
    <property type="match status" value="1"/>
</dbReference>
<dbReference type="InterPro" id="IPR000814">
    <property type="entry name" value="TBP"/>
</dbReference>
<dbReference type="InterPro" id="IPR033711">
    <property type="entry name" value="TBP_archaea"/>
</dbReference>
<dbReference type="InterPro" id="IPR030491">
    <property type="entry name" value="TBP_CS"/>
</dbReference>
<dbReference type="InterPro" id="IPR012295">
    <property type="entry name" value="TBP_dom_sf"/>
</dbReference>
<dbReference type="NCBIfam" id="NF001592">
    <property type="entry name" value="PRK00394.1-1"/>
    <property type="match status" value="1"/>
</dbReference>
<dbReference type="NCBIfam" id="NF001593">
    <property type="entry name" value="PRK00394.1-2"/>
    <property type="match status" value="1"/>
</dbReference>
<dbReference type="PANTHER" id="PTHR10126">
    <property type="entry name" value="TATA-BOX BINDING PROTEIN"/>
    <property type="match status" value="1"/>
</dbReference>
<dbReference type="Pfam" id="PF00352">
    <property type="entry name" value="TBP"/>
    <property type="match status" value="2"/>
</dbReference>
<dbReference type="PRINTS" id="PR00686">
    <property type="entry name" value="TIFACTORIID"/>
</dbReference>
<dbReference type="SUPFAM" id="SSF55945">
    <property type="entry name" value="TATA-box binding protein-like"/>
    <property type="match status" value="2"/>
</dbReference>
<dbReference type="PROSITE" id="PS00351">
    <property type="entry name" value="TFIID"/>
    <property type="match status" value="2"/>
</dbReference>
<keyword id="KW-0238">DNA-binding</keyword>
<keyword id="KW-1185">Reference proteome</keyword>
<keyword id="KW-0677">Repeat</keyword>
<keyword id="KW-0804">Transcription</keyword>
<keyword id="KW-0805">Transcription regulation</keyword>
<evidence type="ECO:0000250" key="1"/>
<evidence type="ECO:0000305" key="2"/>
<gene>
    <name type="primary">tbp</name>
    <name type="synonym">tfiID</name>
    <name type="ordered locus">SSO0951</name>
</gene>
<proteinExistence type="inferred from homology"/>
<protein>
    <recommendedName>
        <fullName>TATA-box-binding protein</fullName>
    </recommendedName>
    <alternativeName>
        <fullName>Box A-binding protein</fullName>
        <shortName>BAP</shortName>
    </alternativeName>
    <alternativeName>
        <fullName>TATA sequence-binding protein</fullName>
        <shortName>TBP</shortName>
    </alternativeName>
    <alternativeName>
        <fullName>TATA-box factor</fullName>
    </alternativeName>
</protein>
<name>TBP_SACS2</name>
<comment type="function">
    <text evidence="1">General factor that plays a role in the activation of archaeal genes transcribed by RNA polymerase. Binds specifically to the TATA box promoter element which lies close to the position of transcription initiation (By similarity).</text>
</comment>
<comment type="similarity">
    <text evidence="2">Belongs to the TBP family.</text>
</comment>
<comment type="sequence caution" evidence="2">
    <conflict type="erroneous initiation">
        <sequence resource="EMBL-CDS" id="AAK41225"/>
    </conflict>
</comment>
<feature type="chain" id="PRO_0000154026" description="TATA-box-binding protein">
    <location>
        <begin position="1"/>
        <end position="198"/>
    </location>
</feature>
<feature type="repeat" description="1">
    <location>
        <begin position="14"/>
        <end position="90"/>
    </location>
</feature>
<feature type="repeat" description="2">
    <location>
        <begin position="105"/>
        <end position="181"/>
    </location>
</feature>